<name>LEUD_HAEI8</name>
<sequence>MAGFKQLSGLVVPLDAANVDTDAIIPKQFLQAITRVGFGKHLFHEWRYLDVDGTKPNPEFVLNYPQYQGATILLARKNLGCGSSREHAPWALADYGFKVMIAPSFADIFYNNSLNNHMLPIRLSEEEVEEIFQWVWANDGKQIHVDLEAMTVTVGDKVYHFELDEFRRHCLLNGLDNIGLTLQHEEKISAYEKNIPAFLR</sequence>
<accession>Q4QLS1</accession>
<proteinExistence type="inferred from homology"/>
<dbReference type="EC" id="4.2.1.33" evidence="1"/>
<dbReference type="EMBL" id="CP000057">
    <property type="protein sequence ID" value="AAX88026.1"/>
    <property type="molecule type" value="Genomic_DNA"/>
</dbReference>
<dbReference type="RefSeq" id="WP_011272334.1">
    <property type="nucleotide sequence ID" value="NC_007146.2"/>
</dbReference>
<dbReference type="SMR" id="Q4QLS1"/>
<dbReference type="KEGG" id="hit:NTHI1163"/>
<dbReference type="HOGENOM" id="CLU_081378_0_3_6"/>
<dbReference type="UniPathway" id="UPA00048">
    <property type="reaction ID" value="UER00071"/>
</dbReference>
<dbReference type="Proteomes" id="UP000002525">
    <property type="component" value="Chromosome"/>
</dbReference>
<dbReference type="GO" id="GO:0009316">
    <property type="term" value="C:3-isopropylmalate dehydratase complex"/>
    <property type="evidence" value="ECO:0007669"/>
    <property type="project" value="InterPro"/>
</dbReference>
<dbReference type="GO" id="GO:0003861">
    <property type="term" value="F:3-isopropylmalate dehydratase activity"/>
    <property type="evidence" value="ECO:0007669"/>
    <property type="project" value="UniProtKB-UniRule"/>
</dbReference>
<dbReference type="GO" id="GO:0009098">
    <property type="term" value="P:L-leucine biosynthetic process"/>
    <property type="evidence" value="ECO:0007669"/>
    <property type="project" value="UniProtKB-UniRule"/>
</dbReference>
<dbReference type="CDD" id="cd01577">
    <property type="entry name" value="IPMI_Swivel"/>
    <property type="match status" value="1"/>
</dbReference>
<dbReference type="FunFam" id="3.20.19.10:FF:000003">
    <property type="entry name" value="3-isopropylmalate dehydratase small subunit"/>
    <property type="match status" value="1"/>
</dbReference>
<dbReference type="Gene3D" id="3.20.19.10">
    <property type="entry name" value="Aconitase, domain 4"/>
    <property type="match status" value="1"/>
</dbReference>
<dbReference type="HAMAP" id="MF_01031">
    <property type="entry name" value="LeuD_type1"/>
    <property type="match status" value="1"/>
</dbReference>
<dbReference type="InterPro" id="IPR004431">
    <property type="entry name" value="3-IsopropMal_deHydase_ssu"/>
</dbReference>
<dbReference type="InterPro" id="IPR015928">
    <property type="entry name" value="Aconitase/3IPM_dehydase_swvl"/>
</dbReference>
<dbReference type="InterPro" id="IPR000573">
    <property type="entry name" value="AconitaseA/IPMdHydase_ssu_swvl"/>
</dbReference>
<dbReference type="InterPro" id="IPR033940">
    <property type="entry name" value="IPMI_Swivel"/>
</dbReference>
<dbReference type="InterPro" id="IPR050075">
    <property type="entry name" value="LeuD"/>
</dbReference>
<dbReference type="NCBIfam" id="TIGR00171">
    <property type="entry name" value="leuD"/>
    <property type="match status" value="1"/>
</dbReference>
<dbReference type="NCBIfam" id="NF002458">
    <property type="entry name" value="PRK01641.1"/>
    <property type="match status" value="1"/>
</dbReference>
<dbReference type="PANTHER" id="PTHR43345:SF5">
    <property type="entry name" value="3-ISOPROPYLMALATE DEHYDRATASE SMALL SUBUNIT"/>
    <property type="match status" value="1"/>
</dbReference>
<dbReference type="PANTHER" id="PTHR43345">
    <property type="entry name" value="3-ISOPROPYLMALATE DEHYDRATASE SMALL SUBUNIT 2-RELATED-RELATED"/>
    <property type="match status" value="1"/>
</dbReference>
<dbReference type="Pfam" id="PF00694">
    <property type="entry name" value="Aconitase_C"/>
    <property type="match status" value="1"/>
</dbReference>
<dbReference type="SUPFAM" id="SSF52016">
    <property type="entry name" value="LeuD/IlvD-like"/>
    <property type="match status" value="1"/>
</dbReference>
<reference key="1">
    <citation type="journal article" date="2005" name="J. Bacteriol.">
        <title>Genomic sequence of an otitis media isolate of nontypeable Haemophilus influenzae: comparative study with H. influenzae serotype d, strain KW20.</title>
        <authorList>
            <person name="Harrison A."/>
            <person name="Dyer D.W."/>
            <person name="Gillaspy A."/>
            <person name="Ray W.C."/>
            <person name="Mungur R."/>
            <person name="Carson M.B."/>
            <person name="Zhong H."/>
            <person name="Gipson J."/>
            <person name="Gipson M."/>
            <person name="Johnson L.S."/>
            <person name="Lewis L."/>
            <person name="Bakaletz L.O."/>
            <person name="Munson R.S. Jr."/>
        </authorList>
    </citation>
    <scope>NUCLEOTIDE SEQUENCE [LARGE SCALE GENOMIC DNA]</scope>
    <source>
        <strain>86-028NP</strain>
    </source>
</reference>
<evidence type="ECO:0000255" key="1">
    <source>
        <dbReference type="HAMAP-Rule" id="MF_01031"/>
    </source>
</evidence>
<keyword id="KW-0028">Amino-acid biosynthesis</keyword>
<keyword id="KW-0100">Branched-chain amino acid biosynthesis</keyword>
<keyword id="KW-0432">Leucine biosynthesis</keyword>
<keyword id="KW-0456">Lyase</keyword>
<gene>
    <name evidence="1" type="primary">leuD</name>
    <name type="ordered locus">NTHI1163</name>
</gene>
<feature type="chain" id="PRO_0000141825" description="3-isopropylmalate dehydratase small subunit">
    <location>
        <begin position="1"/>
        <end position="200"/>
    </location>
</feature>
<protein>
    <recommendedName>
        <fullName evidence="1">3-isopropylmalate dehydratase small subunit</fullName>
        <ecNumber evidence="1">4.2.1.33</ecNumber>
    </recommendedName>
    <alternativeName>
        <fullName evidence="1">Alpha-IPM isomerase</fullName>
        <shortName evidence="1">IPMI</shortName>
    </alternativeName>
    <alternativeName>
        <fullName evidence="1">Isopropylmalate isomerase</fullName>
    </alternativeName>
</protein>
<organism>
    <name type="scientific">Haemophilus influenzae (strain 86-028NP)</name>
    <dbReference type="NCBI Taxonomy" id="281310"/>
    <lineage>
        <taxon>Bacteria</taxon>
        <taxon>Pseudomonadati</taxon>
        <taxon>Pseudomonadota</taxon>
        <taxon>Gammaproteobacteria</taxon>
        <taxon>Pasteurellales</taxon>
        <taxon>Pasteurellaceae</taxon>
        <taxon>Haemophilus</taxon>
    </lineage>
</organism>
<comment type="function">
    <text evidence="1">Catalyzes the isomerization between 2-isopropylmalate and 3-isopropylmalate, via the formation of 2-isopropylmaleate.</text>
</comment>
<comment type="catalytic activity">
    <reaction evidence="1">
        <text>(2R,3S)-3-isopropylmalate = (2S)-2-isopropylmalate</text>
        <dbReference type="Rhea" id="RHEA:32287"/>
        <dbReference type="ChEBI" id="CHEBI:1178"/>
        <dbReference type="ChEBI" id="CHEBI:35121"/>
        <dbReference type="EC" id="4.2.1.33"/>
    </reaction>
</comment>
<comment type="pathway">
    <text evidence="1">Amino-acid biosynthesis; L-leucine biosynthesis; L-leucine from 3-methyl-2-oxobutanoate: step 2/4.</text>
</comment>
<comment type="subunit">
    <text evidence="1">Heterodimer of LeuC and LeuD.</text>
</comment>
<comment type="similarity">
    <text evidence="1">Belongs to the LeuD family. LeuD type 1 subfamily.</text>
</comment>